<comment type="function">
    <text>CHH is the most abundant hormone in the sinus gland of isopods and decapods which controls the blood sugar level. Has a secretagogue action over the amylase released from the midgut gland. May act as a stress hormone.</text>
</comment>
<comment type="function">
    <text>MIH may inhibit Y-organs where molting hormone (ecdysteroid) is secreted and a molting cycle is initiated when MIH secretion diminishes or stops.</text>
</comment>
<comment type="subcellular location">
    <subcellularLocation>
        <location>Secreted</location>
    </subcellularLocation>
</comment>
<comment type="tissue specificity">
    <text>Produced by the medulla terminalis X-organ in the eyestalks and transported to the sinus gland where they are stored and released. Present also in the ventral nervous system.</text>
</comment>
<comment type="PTM">
    <text evidence="4">Stereoinversion of L-Phe (form CHH-A-I) to D-Phe (form CHH-A-II).</text>
</comment>
<comment type="similarity">
    <text evidence="5">Belongs to the arthropod CHH/MIH/GIH/VIH hormone family.</text>
</comment>
<sequence length="134" mass="14996">MMACRTLCLVVVMVASLGTSGVGGRSVEGASRMEKLLSSSNSPSSTPLGFLSQDHSVNKRQVFDQACKGVYDRNLFKKLDRVCEDCYNLYRKPFVATTCRENCYSNWVFRQCLDDLLLSDVIDEYVSNVQMVGK</sequence>
<keyword id="KW-0027">Amidation</keyword>
<keyword id="KW-0119">Carbohydrate metabolism</keyword>
<keyword id="KW-0165">Cleavage on pair of basic residues</keyword>
<keyword id="KW-0208">D-amino acid</keyword>
<keyword id="KW-0903">Direct protein sequencing</keyword>
<keyword id="KW-1015">Disulfide bond</keyword>
<keyword id="KW-0313">Glucose metabolism</keyword>
<keyword id="KW-0372">Hormone</keyword>
<keyword id="KW-0527">Neuropeptide</keyword>
<keyword id="KW-0873">Pyrrolidone carboxylic acid</keyword>
<keyword id="KW-0964">Secreted</keyword>
<keyword id="KW-0732">Signal</keyword>
<dbReference type="EMBL" id="S76846">
    <property type="protein sequence ID" value="AAB32871.1"/>
    <property type="molecule type" value="mRNA"/>
</dbReference>
<dbReference type="EMBL" id="X54842">
    <property type="protein sequence ID" value="CAA38611.1"/>
    <property type="molecule type" value="mRNA"/>
</dbReference>
<dbReference type="PIR" id="S52117">
    <property type="entry name" value="S52117"/>
</dbReference>
<dbReference type="RefSeq" id="XP_042231220.1">
    <property type="nucleotide sequence ID" value="XM_042375286.1"/>
</dbReference>
<dbReference type="SMR" id="P19806"/>
<dbReference type="EnsemblMetazoa" id="XM_042375286.1">
    <property type="protein sequence ID" value="XP_042231220.1"/>
    <property type="gene ID" value="LOC121872494"/>
</dbReference>
<dbReference type="GeneID" id="121872494"/>
<dbReference type="OrthoDB" id="6360056at2759"/>
<dbReference type="GO" id="GO:0005576">
    <property type="term" value="C:extracellular region"/>
    <property type="evidence" value="ECO:0007669"/>
    <property type="project" value="UniProtKB-SubCell"/>
</dbReference>
<dbReference type="GO" id="GO:0005184">
    <property type="term" value="F:neuropeptide hormone activity"/>
    <property type="evidence" value="ECO:0007669"/>
    <property type="project" value="InterPro"/>
</dbReference>
<dbReference type="GO" id="GO:0007623">
    <property type="term" value="P:circadian rhythm"/>
    <property type="evidence" value="ECO:0007669"/>
    <property type="project" value="TreeGrafter"/>
</dbReference>
<dbReference type="GO" id="GO:0006006">
    <property type="term" value="P:glucose metabolic process"/>
    <property type="evidence" value="ECO:0007669"/>
    <property type="project" value="UniProtKB-KW"/>
</dbReference>
<dbReference type="GO" id="GO:0007218">
    <property type="term" value="P:neuropeptide signaling pathway"/>
    <property type="evidence" value="ECO:0007669"/>
    <property type="project" value="UniProtKB-KW"/>
</dbReference>
<dbReference type="Gene3D" id="1.10.2010.10">
    <property type="entry name" value="Crustacean CHH/MIH/GIH neurohormone"/>
    <property type="match status" value="1"/>
</dbReference>
<dbReference type="InterPro" id="IPR018251">
    <property type="entry name" value="Crust_neurhormone_CS"/>
</dbReference>
<dbReference type="InterPro" id="IPR031098">
    <property type="entry name" value="Crust_neurohorm"/>
</dbReference>
<dbReference type="InterPro" id="IPR035957">
    <property type="entry name" value="Crust_neurohorm_sf"/>
</dbReference>
<dbReference type="InterPro" id="IPR001166">
    <property type="entry name" value="Hyperglycemic"/>
</dbReference>
<dbReference type="InterPro" id="IPR000346">
    <property type="entry name" value="Hyperglycemic1"/>
</dbReference>
<dbReference type="PANTHER" id="PTHR35981">
    <property type="entry name" value="ION TRANSPORT PEPTIDE, ISOFORM C"/>
    <property type="match status" value="1"/>
</dbReference>
<dbReference type="PANTHER" id="PTHR35981:SF2">
    <property type="entry name" value="ION TRANSPORT PEPTIDE, ISOFORM C"/>
    <property type="match status" value="1"/>
</dbReference>
<dbReference type="Pfam" id="PF01147">
    <property type="entry name" value="Crust_neurohorm"/>
    <property type="match status" value="1"/>
</dbReference>
<dbReference type="PRINTS" id="PR00548">
    <property type="entry name" value="HYPRGLYCEMC1"/>
</dbReference>
<dbReference type="PRINTS" id="PR00550">
    <property type="entry name" value="HYPRGLYCEMIC"/>
</dbReference>
<dbReference type="SUPFAM" id="SSF81778">
    <property type="entry name" value="Crustacean CHH/MIH/GIH neurohormone"/>
    <property type="match status" value="1"/>
</dbReference>
<dbReference type="PROSITE" id="PS01250">
    <property type="entry name" value="CHH_MIH_GIH"/>
    <property type="match status" value="1"/>
</dbReference>
<proteinExistence type="evidence at protein level"/>
<evidence type="ECO:0000250" key="1"/>
<evidence type="ECO:0000255" key="2"/>
<evidence type="ECO:0000269" key="3">
    <source>
    </source>
</evidence>
<evidence type="ECO:0000269" key="4">
    <source>
    </source>
</evidence>
<evidence type="ECO:0000305" key="5"/>
<accession>P19806</accession>
<accession>Q25014</accession>
<accession>Q26415</accession>
<reference key="1">
    <citation type="journal article" date="1995" name="Biochim. Biophys. Acta">
        <title>Cloning and expression of two mRNAs encoding structurally different crustacean hyperglycemic hormone precursors in the lobster Homarus americanus.</title>
        <authorList>
            <person name="de Kleijn D.P.V."/>
            <person name="de Leeuw E.P.H."/>
            <person name="van den Berg M.C."/>
            <person name="Martens G.J.M."/>
            <person name="van Herp F."/>
        </authorList>
    </citation>
    <scope>NUCLEOTIDE SEQUENCE [MRNA]</scope>
</reference>
<reference key="2">
    <citation type="journal article" date="1991" name="Eur. J. Biochem.">
        <title>Cloning and sequence analysis of cDNA encoding two crustacean hyperglycemic hormones from the lobster Homarus americanus.</title>
        <authorList>
            <person name="Tensen C.P."/>
            <person name="de Kleijn D.P.V."/>
            <person name="van Herp F."/>
        </authorList>
    </citation>
    <scope>NUCLEOTIDE SEQUENCE [MRNA] OF 61-133</scope>
    <scope>AMIDATION AT VAL-132</scope>
    <source>
        <tissue>Eyestalk</tissue>
    </source>
</reference>
<reference key="3">
    <citation type="journal article" date="1990" name="Biochem. Biophys. Res. Commun.">
        <title>Amino acid sequence of a peptide with both molt-inhibiting and hyperglycemic activities in the lobster, Homarus americanus.</title>
        <authorList>
            <person name="Chang E.S."/>
            <person name="Prestwich G.D."/>
            <person name="Bruce M.J."/>
        </authorList>
    </citation>
    <scope>PROTEIN SEQUENCE OF 61-131</scope>
    <source>
        <tissue>Sinus gland</tissue>
    </source>
</reference>
<reference key="4">
    <citation type="journal article" date="1990" name="J. Neurochem.">
        <title>Purification and chemical characterization of peptide G1, an invertebrate neuropeptide that stimulates cyclic GMP metabolism.</title>
        <authorList>
            <person name="Pavloff M.S."/>
            <person name="Goy M.F."/>
        </authorList>
    </citation>
    <scope>PROTEIN SEQUENCE OF 74-110</scope>
</reference>
<reference key="5">
    <citation type="journal article" date="1994" name="J. Biol. Chem.">
        <title>Evidence for a conformational polymorphism of invertebrate neurohormones. D-amino acid residue in crustacean hyperglycemic peptides.</title>
        <authorList>
            <person name="Soyez D."/>
            <person name="van Herp F."/>
            <person name="Rossier J."/>
            <person name="Le Caer J.-P."/>
            <person name="Tensen C.P."/>
            <person name="Lafont R."/>
        </authorList>
    </citation>
    <scope>PROTEIN SEQUENCE OF 61-68</scope>
    <scope>PYROGLUTAMATE FORMATION AT GLN-61</scope>
    <scope>D-AMINO ACID AT PHE-63</scope>
</reference>
<feature type="signal peptide" evidence="1">
    <location>
        <begin position="1"/>
        <end position="24"/>
    </location>
</feature>
<feature type="peptide" id="PRO_0000019039" description="CHH precursor-related peptide A" evidence="2">
    <location>
        <begin position="25"/>
        <end position="58"/>
    </location>
</feature>
<feature type="peptide" id="PRO_0000019040" description="Crustacean hyperglycemic hormone A">
    <location>
        <begin position="61"/>
        <end position="132"/>
    </location>
</feature>
<feature type="modified residue" description="Pyrrolidone carboxylic acid" evidence="4">
    <location>
        <position position="61"/>
    </location>
</feature>
<feature type="modified residue" description="D-phenylalanine; in form CHH-A-II" evidence="4">
    <location>
        <position position="63"/>
    </location>
</feature>
<feature type="modified residue" description="Valine amide" evidence="3">
    <location>
        <position position="132"/>
    </location>
</feature>
<feature type="disulfide bond" evidence="1">
    <location>
        <begin position="67"/>
        <end position="103"/>
    </location>
</feature>
<feature type="disulfide bond" evidence="1">
    <location>
        <begin position="83"/>
        <end position="99"/>
    </location>
</feature>
<feature type="disulfide bond" evidence="1">
    <location>
        <begin position="86"/>
        <end position="112"/>
    </location>
</feature>
<feature type="sequence conflict" description="In Ref. 4; AA sequence." evidence="5" ref="4">
    <original>R</original>
    <variation>RR</variation>
    <location>
        <position position="91"/>
    </location>
</feature>
<feature type="sequence conflict" description="In Ref. 4; AA sequence." evidence="5" ref="4">
    <original>W</original>
    <variation>S</variation>
    <location>
        <position position="107"/>
    </location>
</feature>
<feature type="sequence conflict" description="In Ref. 3; AA sequence." evidence="5" ref="3">
    <original>D</original>
    <variation>N</variation>
    <location>
        <position position="120"/>
    </location>
</feature>
<feature type="sequence conflict" description="In Ref. 2; CAA38611." evidence="5" ref="2">
    <original>G</original>
    <variation>P</variation>
    <location>
        <position position="133"/>
    </location>
</feature>
<protein>
    <recommendedName>
        <fullName>Crustacean hyperglycemic hormones isoform A</fullName>
    </recommendedName>
    <component>
        <recommendedName>
            <fullName>CHH precursor-related peptide A</fullName>
            <shortName>CPRP-A</shortName>
        </recommendedName>
    </component>
    <component>
        <recommendedName>
            <fullName>Crustacean hyperglycemic hormone A</fullName>
            <shortName>CHH-A</shortName>
        </recommendedName>
        <alternativeName>
            <fullName>Molt-inhibiting hormone</fullName>
            <shortName>MIH</shortName>
        </alternativeName>
    </component>
</protein>
<name>CHHA_HOMAM</name>
<organism>
    <name type="scientific">Homarus americanus</name>
    <name type="common">American lobster</name>
    <dbReference type="NCBI Taxonomy" id="6706"/>
    <lineage>
        <taxon>Eukaryota</taxon>
        <taxon>Metazoa</taxon>
        <taxon>Ecdysozoa</taxon>
        <taxon>Arthropoda</taxon>
        <taxon>Crustacea</taxon>
        <taxon>Multicrustacea</taxon>
        <taxon>Malacostraca</taxon>
        <taxon>Eumalacostraca</taxon>
        <taxon>Eucarida</taxon>
        <taxon>Decapoda</taxon>
        <taxon>Pleocyemata</taxon>
        <taxon>Astacidea</taxon>
        <taxon>Nephropoidea</taxon>
        <taxon>Nephropidae</taxon>
        <taxon>Homarus</taxon>
    </lineage>
</organism>